<reference key="1">
    <citation type="journal article" date="2011" name="J. Bacteriol.">
        <title>Complete genome sequence and updated annotation of Desulfovibrio alaskensis G20.</title>
        <authorList>
            <person name="Hauser L.J."/>
            <person name="Land M.L."/>
            <person name="Brown S.D."/>
            <person name="Larimer F."/>
            <person name="Keller K.L."/>
            <person name="Rapp-Giles B.J."/>
            <person name="Price M.N."/>
            <person name="Lin M."/>
            <person name="Bruce D.C."/>
            <person name="Detter J.C."/>
            <person name="Tapia R."/>
            <person name="Han C.S."/>
            <person name="Goodwin L.A."/>
            <person name="Cheng J.F."/>
            <person name="Pitluck S."/>
            <person name="Copeland A."/>
            <person name="Lucas S."/>
            <person name="Nolan M."/>
            <person name="Lapidus A.L."/>
            <person name="Palumbo A.V."/>
            <person name="Wall J.D."/>
        </authorList>
    </citation>
    <scope>NUCLEOTIDE SEQUENCE [LARGE SCALE GENOMIC DNA]</scope>
    <source>
        <strain>ATCC BAA-1058 / DSM 17464 / G20</strain>
    </source>
</reference>
<proteinExistence type="inferred from homology"/>
<dbReference type="EC" id="6.1.1.15" evidence="1"/>
<dbReference type="EMBL" id="CP000112">
    <property type="protein sequence ID" value="ABB39003.1"/>
    <property type="molecule type" value="Genomic_DNA"/>
</dbReference>
<dbReference type="RefSeq" id="WP_011368097.1">
    <property type="nucleotide sequence ID" value="NC_007519.1"/>
</dbReference>
<dbReference type="SMR" id="Q30Z93"/>
<dbReference type="STRING" id="207559.Dde_2206"/>
<dbReference type="KEGG" id="dde:Dde_2206"/>
<dbReference type="eggNOG" id="COG0442">
    <property type="taxonomic scope" value="Bacteria"/>
</dbReference>
<dbReference type="HOGENOM" id="CLU_016739_0_0_7"/>
<dbReference type="Proteomes" id="UP000002710">
    <property type="component" value="Chromosome"/>
</dbReference>
<dbReference type="GO" id="GO:0005829">
    <property type="term" value="C:cytosol"/>
    <property type="evidence" value="ECO:0007669"/>
    <property type="project" value="TreeGrafter"/>
</dbReference>
<dbReference type="GO" id="GO:0002161">
    <property type="term" value="F:aminoacyl-tRNA deacylase activity"/>
    <property type="evidence" value="ECO:0007669"/>
    <property type="project" value="InterPro"/>
</dbReference>
<dbReference type="GO" id="GO:0005524">
    <property type="term" value="F:ATP binding"/>
    <property type="evidence" value="ECO:0007669"/>
    <property type="project" value="UniProtKB-UniRule"/>
</dbReference>
<dbReference type="GO" id="GO:0004827">
    <property type="term" value="F:proline-tRNA ligase activity"/>
    <property type="evidence" value="ECO:0007669"/>
    <property type="project" value="UniProtKB-UniRule"/>
</dbReference>
<dbReference type="GO" id="GO:0006433">
    <property type="term" value="P:prolyl-tRNA aminoacylation"/>
    <property type="evidence" value="ECO:0007669"/>
    <property type="project" value="UniProtKB-UniRule"/>
</dbReference>
<dbReference type="CDD" id="cd04334">
    <property type="entry name" value="ProRS-INS"/>
    <property type="match status" value="1"/>
</dbReference>
<dbReference type="CDD" id="cd00861">
    <property type="entry name" value="ProRS_anticodon_short"/>
    <property type="match status" value="1"/>
</dbReference>
<dbReference type="CDD" id="cd00779">
    <property type="entry name" value="ProRS_core_prok"/>
    <property type="match status" value="1"/>
</dbReference>
<dbReference type="FunFam" id="3.30.930.10:FF:000065">
    <property type="entry name" value="Proline--tRNA ligase"/>
    <property type="match status" value="1"/>
</dbReference>
<dbReference type="FunFam" id="3.30.930.10:FF:000066">
    <property type="entry name" value="Proline--tRNA ligase"/>
    <property type="match status" value="1"/>
</dbReference>
<dbReference type="Gene3D" id="3.40.50.800">
    <property type="entry name" value="Anticodon-binding domain"/>
    <property type="match status" value="1"/>
</dbReference>
<dbReference type="Gene3D" id="3.30.930.10">
    <property type="entry name" value="Bira Bifunctional Protein, Domain 2"/>
    <property type="match status" value="2"/>
</dbReference>
<dbReference type="HAMAP" id="MF_01569">
    <property type="entry name" value="Pro_tRNA_synth_type1"/>
    <property type="match status" value="1"/>
</dbReference>
<dbReference type="InterPro" id="IPR002314">
    <property type="entry name" value="aa-tRNA-synt_IIb"/>
</dbReference>
<dbReference type="InterPro" id="IPR006195">
    <property type="entry name" value="aa-tRNA-synth_II"/>
</dbReference>
<dbReference type="InterPro" id="IPR045864">
    <property type="entry name" value="aa-tRNA-synth_II/BPL/LPL"/>
</dbReference>
<dbReference type="InterPro" id="IPR004154">
    <property type="entry name" value="Anticodon-bd"/>
</dbReference>
<dbReference type="InterPro" id="IPR036621">
    <property type="entry name" value="Anticodon-bd_dom_sf"/>
</dbReference>
<dbReference type="InterPro" id="IPR002316">
    <property type="entry name" value="Pro-tRNA-ligase_IIa"/>
</dbReference>
<dbReference type="InterPro" id="IPR004500">
    <property type="entry name" value="Pro-tRNA-synth_IIa_bac-type"/>
</dbReference>
<dbReference type="InterPro" id="IPR023717">
    <property type="entry name" value="Pro-tRNA-Synthase_IIa_type1"/>
</dbReference>
<dbReference type="InterPro" id="IPR050062">
    <property type="entry name" value="Pro-tRNA_synthetase"/>
</dbReference>
<dbReference type="InterPro" id="IPR044140">
    <property type="entry name" value="ProRS_anticodon_short"/>
</dbReference>
<dbReference type="InterPro" id="IPR033730">
    <property type="entry name" value="ProRS_core_prok"/>
</dbReference>
<dbReference type="InterPro" id="IPR036754">
    <property type="entry name" value="YbaK/aa-tRNA-synt-asso_dom_sf"/>
</dbReference>
<dbReference type="InterPro" id="IPR007214">
    <property type="entry name" value="YbaK/aa-tRNA-synth-assoc-dom"/>
</dbReference>
<dbReference type="NCBIfam" id="NF006625">
    <property type="entry name" value="PRK09194.1"/>
    <property type="match status" value="1"/>
</dbReference>
<dbReference type="NCBIfam" id="TIGR00409">
    <property type="entry name" value="proS_fam_II"/>
    <property type="match status" value="1"/>
</dbReference>
<dbReference type="PANTHER" id="PTHR42753">
    <property type="entry name" value="MITOCHONDRIAL RIBOSOME PROTEIN L39/PROLYL-TRNA LIGASE FAMILY MEMBER"/>
    <property type="match status" value="1"/>
</dbReference>
<dbReference type="PANTHER" id="PTHR42753:SF2">
    <property type="entry name" value="PROLINE--TRNA LIGASE"/>
    <property type="match status" value="1"/>
</dbReference>
<dbReference type="Pfam" id="PF03129">
    <property type="entry name" value="HGTP_anticodon"/>
    <property type="match status" value="1"/>
</dbReference>
<dbReference type="Pfam" id="PF00587">
    <property type="entry name" value="tRNA-synt_2b"/>
    <property type="match status" value="1"/>
</dbReference>
<dbReference type="Pfam" id="PF04073">
    <property type="entry name" value="tRNA_edit"/>
    <property type="match status" value="1"/>
</dbReference>
<dbReference type="PIRSF" id="PIRSF001535">
    <property type="entry name" value="ProRS_1"/>
    <property type="match status" value="1"/>
</dbReference>
<dbReference type="PRINTS" id="PR01046">
    <property type="entry name" value="TRNASYNTHPRO"/>
</dbReference>
<dbReference type="SUPFAM" id="SSF52954">
    <property type="entry name" value="Class II aaRS ABD-related"/>
    <property type="match status" value="1"/>
</dbReference>
<dbReference type="SUPFAM" id="SSF55681">
    <property type="entry name" value="Class II aaRS and biotin synthetases"/>
    <property type="match status" value="1"/>
</dbReference>
<dbReference type="SUPFAM" id="SSF55826">
    <property type="entry name" value="YbaK/ProRS associated domain"/>
    <property type="match status" value="1"/>
</dbReference>
<dbReference type="PROSITE" id="PS50862">
    <property type="entry name" value="AA_TRNA_LIGASE_II"/>
    <property type="match status" value="1"/>
</dbReference>
<accession>Q30Z93</accession>
<feature type="chain" id="PRO_0000248686" description="Proline--tRNA ligase">
    <location>
        <begin position="1"/>
        <end position="574"/>
    </location>
</feature>
<organism>
    <name type="scientific">Oleidesulfovibrio alaskensis (strain ATCC BAA-1058 / DSM 17464 / G20)</name>
    <name type="common">Desulfovibrio alaskensis</name>
    <dbReference type="NCBI Taxonomy" id="207559"/>
    <lineage>
        <taxon>Bacteria</taxon>
        <taxon>Pseudomonadati</taxon>
        <taxon>Thermodesulfobacteriota</taxon>
        <taxon>Desulfovibrionia</taxon>
        <taxon>Desulfovibrionales</taxon>
        <taxon>Desulfovibrionaceae</taxon>
        <taxon>Oleidesulfovibrio</taxon>
    </lineage>
</organism>
<comment type="function">
    <text evidence="1">Catalyzes the attachment of proline to tRNA(Pro) in a two-step reaction: proline is first activated by ATP to form Pro-AMP and then transferred to the acceptor end of tRNA(Pro). As ProRS can inadvertently accommodate and process non-cognate amino acids such as alanine and cysteine, to avoid such errors it has two additional distinct editing activities against alanine. One activity is designated as 'pretransfer' editing and involves the tRNA(Pro)-independent hydrolysis of activated Ala-AMP. The other activity is designated 'posttransfer' editing and involves deacylation of mischarged Ala-tRNA(Pro). The misacylated Cys-tRNA(Pro) is not edited by ProRS.</text>
</comment>
<comment type="catalytic activity">
    <reaction evidence="1">
        <text>tRNA(Pro) + L-proline + ATP = L-prolyl-tRNA(Pro) + AMP + diphosphate</text>
        <dbReference type="Rhea" id="RHEA:14305"/>
        <dbReference type="Rhea" id="RHEA-COMP:9700"/>
        <dbReference type="Rhea" id="RHEA-COMP:9702"/>
        <dbReference type="ChEBI" id="CHEBI:30616"/>
        <dbReference type="ChEBI" id="CHEBI:33019"/>
        <dbReference type="ChEBI" id="CHEBI:60039"/>
        <dbReference type="ChEBI" id="CHEBI:78442"/>
        <dbReference type="ChEBI" id="CHEBI:78532"/>
        <dbReference type="ChEBI" id="CHEBI:456215"/>
        <dbReference type="EC" id="6.1.1.15"/>
    </reaction>
</comment>
<comment type="subunit">
    <text evidence="1">Homodimer.</text>
</comment>
<comment type="subcellular location">
    <subcellularLocation>
        <location evidence="1">Cytoplasm</location>
    </subcellularLocation>
</comment>
<comment type="domain">
    <text evidence="1">Consists of three domains: the N-terminal catalytic domain, the editing domain and the C-terminal anticodon-binding domain.</text>
</comment>
<comment type="similarity">
    <text evidence="1">Belongs to the class-II aminoacyl-tRNA synthetase family. ProS type 1 subfamily.</text>
</comment>
<name>SYP_OLEA2</name>
<keyword id="KW-0030">Aminoacyl-tRNA synthetase</keyword>
<keyword id="KW-0067">ATP-binding</keyword>
<keyword id="KW-0963">Cytoplasm</keyword>
<keyword id="KW-0436">Ligase</keyword>
<keyword id="KW-0547">Nucleotide-binding</keyword>
<keyword id="KW-0648">Protein biosynthesis</keyword>
<keyword id="KW-1185">Reference proteome</keyword>
<evidence type="ECO:0000255" key="1">
    <source>
        <dbReference type="HAMAP-Rule" id="MF_01569"/>
    </source>
</evidence>
<protein>
    <recommendedName>
        <fullName evidence="1">Proline--tRNA ligase</fullName>
        <ecNumber evidence="1">6.1.1.15</ecNumber>
    </recommendedName>
    <alternativeName>
        <fullName evidence="1">Prolyl-tRNA synthetase</fullName>
        <shortName evidence="1">ProRS</shortName>
    </alternativeName>
</protein>
<gene>
    <name evidence="1" type="primary">proS</name>
    <name type="ordered locus">Dde_2206</name>
</gene>
<sequence length="574" mass="63932">MRWSNFYIPTLKEAPADAEVVSHKLLIRAGMIRKLTSGIYIYLPLGLRSIEKAASIVRQEMNSAGAQELLMPMVQPADLWQESGRWDFYGKELLRISDRHGRDYCLGPTHEEVITDLVRGEVRSYRQLPLNLYQIQTKFRDEIRPRFGLMRGREFMMKDAYSFDRDAQGLDLSYRAMYEAYMKIFSRMGLKFRAVEADSGSIGGSFSHEFMVLAETGEDTIAFCHDCDYSANVERAEVVCTLDECDAPVAGVEEVHTPDRHTVEEVCEFMNVPAAALIKTLLYVADGEPVAALVRGDRELNEAKLKNLLRADTLELASPEQVREWTGAPVGFAGPVGLGVKRLFADNELRLATDWITGANKADTHLRHVSLKRDTRLSGYADLRMITDKDPCPRCSGTLELTRGIEVGHVFKLGTKYSEAMGCKFLDENGKEQVMLMGCYGIGVSRVVAACIEQNSDENGIVFPPPIAPFEVLLLNLDGKNDDVNARVDELYGAVQAAGCDVLMDDRNERPGVKFKDADLIGVPMQLVVGGKGLARGIVEAKDRRTGEKTELPVDGFAQAFAAWRRQVLQGWGL</sequence>